<gene>
    <name evidence="1" type="primary">rplM</name>
    <name type="ordered locus">Chy400_2586</name>
</gene>
<organism>
    <name type="scientific">Chloroflexus aurantiacus (strain ATCC 29364 / DSM 637 / Y-400-fl)</name>
    <dbReference type="NCBI Taxonomy" id="480224"/>
    <lineage>
        <taxon>Bacteria</taxon>
        <taxon>Bacillati</taxon>
        <taxon>Chloroflexota</taxon>
        <taxon>Chloroflexia</taxon>
        <taxon>Chloroflexales</taxon>
        <taxon>Chloroflexineae</taxon>
        <taxon>Chloroflexaceae</taxon>
        <taxon>Chloroflexus</taxon>
    </lineage>
</organism>
<comment type="function">
    <text evidence="1">This protein is one of the early assembly proteins of the 50S ribosomal subunit, although it is not seen to bind rRNA by itself. It is important during the early stages of 50S assembly.</text>
</comment>
<comment type="subunit">
    <text evidence="1">Part of the 50S ribosomal subunit.</text>
</comment>
<comment type="similarity">
    <text evidence="1">Belongs to the universal ribosomal protein uL13 family.</text>
</comment>
<sequence length="144" mass="16553">MKTYHQKPTEVQRDWYVIDASGKVLGRLATQISTLLRGKHKPTFTPSIDGGDFVIVVNAEKIVLTGRKPDQKIYYRHTGYPGGIKATPYKMMLAKHPDRILRLAVKRMLPKNRMGRRLLSKLRIYAGPNHPHAAQQPKPYIPRW</sequence>
<reference key="1">
    <citation type="submission" date="2009-01" db="EMBL/GenBank/DDBJ databases">
        <title>Complete sequence of Chloroflexus sp. Y-400-fl.</title>
        <authorList>
            <consortium name="US DOE Joint Genome Institute"/>
            <person name="Lucas S."/>
            <person name="Copeland A."/>
            <person name="Lapidus A."/>
            <person name="Glavina del Rio T."/>
            <person name="Dalin E."/>
            <person name="Tice H."/>
            <person name="Bruce D."/>
            <person name="Goodwin L."/>
            <person name="Pitluck S."/>
            <person name="Sims D."/>
            <person name="Kiss H."/>
            <person name="Brettin T."/>
            <person name="Detter J.C."/>
            <person name="Han C."/>
            <person name="Larimer F."/>
            <person name="Land M."/>
            <person name="Hauser L."/>
            <person name="Kyrpides N."/>
            <person name="Ovchinnikova G."/>
            <person name="Bryant D.A."/>
            <person name="Richardson P."/>
        </authorList>
    </citation>
    <scope>NUCLEOTIDE SEQUENCE [LARGE SCALE GENOMIC DNA]</scope>
    <source>
        <strain>ATCC 29364 / DSM 637 / Y-400-fl</strain>
    </source>
</reference>
<evidence type="ECO:0000255" key="1">
    <source>
        <dbReference type="HAMAP-Rule" id="MF_01366"/>
    </source>
</evidence>
<evidence type="ECO:0000305" key="2"/>
<protein>
    <recommendedName>
        <fullName evidence="1">Large ribosomal subunit protein uL13</fullName>
    </recommendedName>
    <alternativeName>
        <fullName evidence="2">50S ribosomal protein L13</fullName>
    </alternativeName>
</protein>
<proteinExistence type="inferred from homology"/>
<name>RL13_CHLSY</name>
<dbReference type="EMBL" id="CP001364">
    <property type="protein sequence ID" value="ACM53978.1"/>
    <property type="molecule type" value="Genomic_DNA"/>
</dbReference>
<dbReference type="SMR" id="B9LJG2"/>
<dbReference type="KEGG" id="chl:Chy400_2586"/>
<dbReference type="HOGENOM" id="CLU_082184_2_2_0"/>
<dbReference type="OrthoDB" id="9801330at2"/>
<dbReference type="GO" id="GO:0022625">
    <property type="term" value="C:cytosolic large ribosomal subunit"/>
    <property type="evidence" value="ECO:0007669"/>
    <property type="project" value="TreeGrafter"/>
</dbReference>
<dbReference type="GO" id="GO:0003729">
    <property type="term" value="F:mRNA binding"/>
    <property type="evidence" value="ECO:0007669"/>
    <property type="project" value="TreeGrafter"/>
</dbReference>
<dbReference type="GO" id="GO:0003735">
    <property type="term" value="F:structural constituent of ribosome"/>
    <property type="evidence" value="ECO:0007669"/>
    <property type="project" value="InterPro"/>
</dbReference>
<dbReference type="GO" id="GO:0017148">
    <property type="term" value="P:negative regulation of translation"/>
    <property type="evidence" value="ECO:0007669"/>
    <property type="project" value="TreeGrafter"/>
</dbReference>
<dbReference type="GO" id="GO:0006412">
    <property type="term" value="P:translation"/>
    <property type="evidence" value="ECO:0007669"/>
    <property type="project" value="UniProtKB-UniRule"/>
</dbReference>
<dbReference type="CDD" id="cd00392">
    <property type="entry name" value="Ribosomal_L13"/>
    <property type="match status" value="1"/>
</dbReference>
<dbReference type="FunFam" id="3.90.1180.10:FF:000001">
    <property type="entry name" value="50S ribosomal protein L13"/>
    <property type="match status" value="1"/>
</dbReference>
<dbReference type="Gene3D" id="3.90.1180.10">
    <property type="entry name" value="Ribosomal protein L13"/>
    <property type="match status" value="1"/>
</dbReference>
<dbReference type="HAMAP" id="MF_01366">
    <property type="entry name" value="Ribosomal_uL13"/>
    <property type="match status" value="1"/>
</dbReference>
<dbReference type="InterPro" id="IPR005822">
    <property type="entry name" value="Ribosomal_uL13"/>
</dbReference>
<dbReference type="InterPro" id="IPR005823">
    <property type="entry name" value="Ribosomal_uL13_bac-type"/>
</dbReference>
<dbReference type="InterPro" id="IPR023563">
    <property type="entry name" value="Ribosomal_uL13_CS"/>
</dbReference>
<dbReference type="InterPro" id="IPR036899">
    <property type="entry name" value="Ribosomal_uL13_sf"/>
</dbReference>
<dbReference type="NCBIfam" id="TIGR01066">
    <property type="entry name" value="rplM_bact"/>
    <property type="match status" value="1"/>
</dbReference>
<dbReference type="PANTHER" id="PTHR11545:SF2">
    <property type="entry name" value="LARGE RIBOSOMAL SUBUNIT PROTEIN UL13M"/>
    <property type="match status" value="1"/>
</dbReference>
<dbReference type="PANTHER" id="PTHR11545">
    <property type="entry name" value="RIBOSOMAL PROTEIN L13"/>
    <property type="match status" value="1"/>
</dbReference>
<dbReference type="Pfam" id="PF00572">
    <property type="entry name" value="Ribosomal_L13"/>
    <property type="match status" value="1"/>
</dbReference>
<dbReference type="PIRSF" id="PIRSF002181">
    <property type="entry name" value="Ribosomal_L13"/>
    <property type="match status" value="1"/>
</dbReference>
<dbReference type="SUPFAM" id="SSF52161">
    <property type="entry name" value="Ribosomal protein L13"/>
    <property type="match status" value="1"/>
</dbReference>
<dbReference type="PROSITE" id="PS00783">
    <property type="entry name" value="RIBOSOMAL_L13"/>
    <property type="match status" value="1"/>
</dbReference>
<keyword id="KW-0687">Ribonucleoprotein</keyword>
<keyword id="KW-0689">Ribosomal protein</keyword>
<feature type="chain" id="PRO_1000166859" description="Large ribosomal subunit protein uL13">
    <location>
        <begin position="1"/>
        <end position="144"/>
    </location>
</feature>
<accession>B9LJG2</accession>